<keyword id="KW-1185">Reference proteome</keyword>
<dbReference type="EMBL" id="DQ643392">
    <property type="protein sequence ID" value="ABF82066.1"/>
    <property type="molecule type" value="Genomic_DNA"/>
</dbReference>
<dbReference type="RefSeq" id="YP_654608.1">
    <property type="nucleotide sequence ID" value="NC_008187.1"/>
</dbReference>
<dbReference type="KEGG" id="vg:4156346"/>
<dbReference type="OrthoDB" id="36038at10239"/>
<dbReference type="Proteomes" id="UP000001358">
    <property type="component" value="Genome"/>
</dbReference>
<evidence type="ECO:0000305" key="1"/>
<reference key="1">
    <citation type="journal article" date="2006" name="J. Virol.">
        <title>Genome of invertebrate iridescent virus type 3 (mosquito iridescent virus).</title>
        <authorList>
            <person name="Delhon G."/>
            <person name="Tulman E.R."/>
            <person name="Afonso C.L."/>
            <person name="Lu Z."/>
            <person name="Becnel J.J."/>
            <person name="Moser B.A."/>
            <person name="Kutish G.F."/>
            <person name="Rock D.L."/>
        </authorList>
    </citation>
    <scope>NUCLEOTIDE SEQUENCE [LARGE SCALE GENOMIC DNA]</scope>
</reference>
<name>VF219_IIV3</name>
<organismHost>
    <name type="scientific">Aedes vexans</name>
    <name type="common">Inland floodwater mosquito</name>
    <name type="synonym">Culex vexans</name>
    <dbReference type="NCBI Taxonomy" id="7163"/>
</organismHost>
<organismHost>
    <name type="scientific">Culex territans</name>
    <dbReference type="NCBI Taxonomy" id="42431"/>
</organismHost>
<organismHost>
    <name type="scientific">Culiseta annulata</name>
    <dbReference type="NCBI Taxonomy" id="332058"/>
</organismHost>
<organismHost>
    <name type="scientific">Ochlerotatus sollicitans</name>
    <name type="common">eastern saltmarsh mosquito</name>
    <dbReference type="NCBI Taxonomy" id="310513"/>
</organismHost>
<organismHost>
    <name type="scientific">Ochlerotatus taeniorhynchus</name>
    <name type="common">Black salt marsh mosquito</name>
    <name type="synonym">Aedes taeniorhynchus</name>
    <dbReference type="NCBI Taxonomy" id="329105"/>
</organismHost>
<organismHost>
    <name type="scientific">Psorophora ferox</name>
    <dbReference type="NCBI Taxonomy" id="7183"/>
</organismHost>
<organism>
    <name type="scientific">Invertebrate iridescent virus 3</name>
    <name type="common">IIV-3</name>
    <name type="synonym">Mosquito iridescent virus</name>
    <dbReference type="NCBI Taxonomy" id="345201"/>
    <lineage>
        <taxon>Viruses</taxon>
        <taxon>Varidnaviria</taxon>
        <taxon>Bamfordvirae</taxon>
        <taxon>Nucleocytoviricota</taxon>
        <taxon>Megaviricetes</taxon>
        <taxon>Pimascovirales</taxon>
        <taxon>Iridoviridae</taxon>
        <taxon>Betairidovirinae</taxon>
        <taxon>Chloriridovirus</taxon>
    </lineage>
</organism>
<feature type="chain" id="PRO_0000377936" description="Uncharacterized protein 036R">
    <location>
        <begin position="1"/>
        <end position="258"/>
    </location>
</feature>
<comment type="similarity">
    <text evidence="1">Belongs to the IIV-6 219L family.</text>
</comment>
<proteinExistence type="inferred from homology"/>
<protein>
    <recommendedName>
        <fullName>Uncharacterized protein 036R</fullName>
    </recommendedName>
</protein>
<sequence>MSATPLFKTYDPVEKLISQVGALASGGTGGGTTTNALATTGGTMTGNITMSGTSKITQATAPTVASDVTNKQYVDSAVSAVSAPQMSFAGWKLNNASFFEVNPTTQVKLFTNIDGIGANQWTDTTEDAISVSGGIFSIQNKSTSKTMWYICSAHFTGLSNKTAPTVAGALRFKFNDEDSGNPINSQWCVLRSFSTSNVPSPEASAPQVSGSNMMYATISVPPGTTRRISVIANNPSATDVMQLNQTDDVCQIMITRQS</sequence>
<accession>Q197C4</accession>
<gene>
    <name type="ORF">IIV3-036R</name>
</gene>